<reference key="1">
    <citation type="journal article" date="2007" name="PLoS Genet.">
        <title>A tale of two oxidation states: bacterial colonization of arsenic-rich environments.</title>
        <authorList>
            <person name="Muller D."/>
            <person name="Medigue C."/>
            <person name="Koechler S."/>
            <person name="Barbe V."/>
            <person name="Barakat M."/>
            <person name="Talla E."/>
            <person name="Bonnefoy V."/>
            <person name="Krin E."/>
            <person name="Arsene-Ploetze F."/>
            <person name="Carapito C."/>
            <person name="Chandler M."/>
            <person name="Cournoyer B."/>
            <person name="Cruveiller S."/>
            <person name="Dossat C."/>
            <person name="Duval S."/>
            <person name="Heymann M."/>
            <person name="Leize E."/>
            <person name="Lieutaud A."/>
            <person name="Lievremont D."/>
            <person name="Makita Y."/>
            <person name="Mangenot S."/>
            <person name="Nitschke W."/>
            <person name="Ortet P."/>
            <person name="Perdrial N."/>
            <person name="Schoepp B."/>
            <person name="Siguier P."/>
            <person name="Simeonova D.D."/>
            <person name="Rouy Z."/>
            <person name="Segurens B."/>
            <person name="Turlin E."/>
            <person name="Vallenet D."/>
            <person name="van Dorsselaer A."/>
            <person name="Weiss S."/>
            <person name="Weissenbach J."/>
            <person name="Lett M.-C."/>
            <person name="Danchin A."/>
            <person name="Bertin P.N."/>
        </authorList>
    </citation>
    <scope>NUCLEOTIDE SEQUENCE [LARGE SCALE GENOMIC DNA]</scope>
    <source>
        <strain>ULPAs1</strain>
    </source>
</reference>
<proteinExistence type="inferred from homology"/>
<protein>
    <recommendedName>
        <fullName evidence="1">ATP phosphoribosyltransferase</fullName>
        <shortName evidence="1">ATP-PRT</shortName>
        <shortName evidence="1">ATP-PRTase</shortName>
        <ecNumber evidence="1">2.4.2.17</ecNumber>
    </recommendedName>
</protein>
<name>HIS1_HERAR</name>
<comment type="function">
    <text evidence="1">Catalyzes the condensation of ATP and 5-phosphoribose 1-diphosphate to form N'-(5'-phosphoribosyl)-ATP (PR-ATP). Has a crucial role in the pathway because the rate of histidine biosynthesis seems to be controlled primarily by regulation of HisG enzymatic activity.</text>
</comment>
<comment type="catalytic activity">
    <reaction evidence="1">
        <text>1-(5-phospho-beta-D-ribosyl)-ATP + diphosphate = 5-phospho-alpha-D-ribose 1-diphosphate + ATP</text>
        <dbReference type="Rhea" id="RHEA:18473"/>
        <dbReference type="ChEBI" id="CHEBI:30616"/>
        <dbReference type="ChEBI" id="CHEBI:33019"/>
        <dbReference type="ChEBI" id="CHEBI:58017"/>
        <dbReference type="ChEBI" id="CHEBI:73183"/>
        <dbReference type="EC" id="2.4.2.17"/>
    </reaction>
</comment>
<comment type="pathway">
    <text evidence="1">Amino-acid biosynthesis; L-histidine biosynthesis; L-histidine from 5-phospho-alpha-D-ribose 1-diphosphate: step 1/9.</text>
</comment>
<comment type="subunit">
    <text evidence="1">Heteromultimer composed of HisG and HisZ subunits.</text>
</comment>
<comment type="subcellular location">
    <subcellularLocation>
        <location evidence="1">Cytoplasm</location>
    </subcellularLocation>
</comment>
<comment type="domain">
    <text>Lacks the C-terminal regulatory region which is replaced by HisZ.</text>
</comment>
<comment type="similarity">
    <text evidence="1">Belongs to the ATP phosphoribosyltransferase family. Short subfamily.</text>
</comment>
<sequence>MMQVRMQAEPQQLTLALSKGRIFEETLPLLEAAGIKVTEDPETSRKLILQTSDANVRVIIVRASDVPTYVQYGAADFGVAGKDVLLEHGGEGLYQPIDLHIAKCRMSVAVKDGFDYASAVQQGARLRVVTKYVQTAREHFAAKGVHVDLIKLYGSMELGPLVGLADAIVDLVSTGSTLRANQLVEVEHIMEISSRLVVNKAALKLKRERLQPILEAFEKASKRSS</sequence>
<accession>A4G9J2</accession>
<gene>
    <name evidence="1" type="primary">hisG</name>
    <name type="ordered locus">HEAR3070</name>
</gene>
<keyword id="KW-0028">Amino-acid biosynthesis</keyword>
<keyword id="KW-0067">ATP-binding</keyword>
<keyword id="KW-0963">Cytoplasm</keyword>
<keyword id="KW-0328">Glycosyltransferase</keyword>
<keyword id="KW-0368">Histidine biosynthesis</keyword>
<keyword id="KW-0547">Nucleotide-binding</keyword>
<keyword id="KW-1185">Reference proteome</keyword>
<keyword id="KW-0808">Transferase</keyword>
<organism>
    <name type="scientific">Herminiimonas arsenicoxydans</name>
    <dbReference type="NCBI Taxonomy" id="204773"/>
    <lineage>
        <taxon>Bacteria</taxon>
        <taxon>Pseudomonadati</taxon>
        <taxon>Pseudomonadota</taxon>
        <taxon>Betaproteobacteria</taxon>
        <taxon>Burkholderiales</taxon>
        <taxon>Oxalobacteraceae</taxon>
        <taxon>Herminiimonas</taxon>
    </lineage>
</organism>
<dbReference type="EC" id="2.4.2.17" evidence="1"/>
<dbReference type="EMBL" id="CU207211">
    <property type="protein sequence ID" value="CAL63179.1"/>
    <property type="molecule type" value="Genomic_DNA"/>
</dbReference>
<dbReference type="SMR" id="A4G9J2"/>
<dbReference type="STRING" id="204773.HEAR3070"/>
<dbReference type="KEGG" id="har:HEAR3070"/>
<dbReference type="eggNOG" id="COG0040">
    <property type="taxonomic scope" value="Bacteria"/>
</dbReference>
<dbReference type="HOGENOM" id="CLU_038115_2_0_4"/>
<dbReference type="UniPathway" id="UPA00031">
    <property type="reaction ID" value="UER00006"/>
</dbReference>
<dbReference type="Proteomes" id="UP000006697">
    <property type="component" value="Chromosome"/>
</dbReference>
<dbReference type="GO" id="GO:0005737">
    <property type="term" value="C:cytoplasm"/>
    <property type="evidence" value="ECO:0007669"/>
    <property type="project" value="UniProtKB-SubCell"/>
</dbReference>
<dbReference type="GO" id="GO:0005524">
    <property type="term" value="F:ATP binding"/>
    <property type="evidence" value="ECO:0007669"/>
    <property type="project" value="UniProtKB-KW"/>
</dbReference>
<dbReference type="GO" id="GO:0003879">
    <property type="term" value="F:ATP phosphoribosyltransferase activity"/>
    <property type="evidence" value="ECO:0007669"/>
    <property type="project" value="UniProtKB-UniRule"/>
</dbReference>
<dbReference type="GO" id="GO:0000105">
    <property type="term" value="P:L-histidine biosynthetic process"/>
    <property type="evidence" value="ECO:0007669"/>
    <property type="project" value="UniProtKB-UniRule"/>
</dbReference>
<dbReference type="CDD" id="cd13595">
    <property type="entry name" value="PBP2_HisGs"/>
    <property type="match status" value="1"/>
</dbReference>
<dbReference type="FunFam" id="3.40.190.10:FF:000011">
    <property type="entry name" value="ATP phosphoribosyltransferase"/>
    <property type="match status" value="1"/>
</dbReference>
<dbReference type="Gene3D" id="3.40.190.10">
    <property type="entry name" value="Periplasmic binding protein-like II"/>
    <property type="match status" value="2"/>
</dbReference>
<dbReference type="HAMAP" id="MF_01018">
    <property type="entry name" value="HisG_Short"/>
    <property type="match status" value="1"/>
</dbReference>
<dbReference type="InterPro" id="IPR013820">
    <property type="entry name" value="ATP_PRibTrfase_cat"/>
</dbReference>
<dbReference type="InterPro" id="IPR018198">
    <property type="entry name" value="ATP_PRibTrfase_CS"/>
</dbReference>
<dbReference type="InterPro" id="IPR001348">
    <property type="entry name" value="ATP_PRibTrfase_HisG"/>
</dbReference>
<dbReference type="InterPro" id="IPR024893">
    <property type="entry name" value="ATP_PRibTrfase_HisG_short"/>
</dbReference>
<dbReference type="NCBIfam" id="TIGR00070">
    <property type="entry name" value="hisG"/>
    <property type="match status" value="1"/>
</dbReference>
<dbReference type="PANTHER" id="PTHR21403:SF8">
    <property type="entry name" value="ATP PHOSPHORIBOSYLTRANSFERASE"/>
    <property type="match status" value="1"/>
</dbReference>
<dbReference type="PANTHER" id="PTHR21403">
    <property type="entry name" value="ATP PHOSPHORIBOSYLTRANSFERASE ATP-PRTASE"/>
    <property type="match status" value="1"/>
</dbReference>
<dbReference type="Pfam" id="PF01634">
    <property type="entry name" value="HisG"/>
    <property type="match status" value="1"/>
</dbReference>
<dbReference type="SUPFAM" id="SSF53850">
    <property type="entry name" value="Periplasmic binding protein-like II"/>
    <property type="match status" value="1"/>
</dbReference>
<dbReference type="PROSITE" id="PS01316">
    <property type="entry name" value="ATP_P_PHORIBOSYLTR"/>
    <property type="match status" value="1"/>
</dbReference>
<feature type="chain" id="PRO_0000319523" description="ATP phosphoribosyltransferase">
    <location>
        <begin position="1"/>
        <end position="225"/>
    </location>
</feature>
<evidence type="ECO:0000255" key="1">
    <source>
        <dbReference type="HAMAP-Rule" id="MF_01018"/>
    </source>
</evidence>